<reference key="1">
    <citation type="journal article" date="2008" name="Genome Biol.">
        <title>The complete genome, comparative and functional analysis of Stenotrophomonas maltophilia reveals an organism heavily shielded by drug resistance determinants.</title>
        <authorList>
            <person name="Crossman L.C."/>
            <person name="Gould V.C."/>
            <person name="Dow J.M."/>
            <person name="Vernikos G.S."/>
            <person name="Okazaki A."/>
            <person name="Sebaihia M."/>
            <person name="Saunders D."/>
            <person name="Arrowsmith C."/>
            <person name="Carver T."/>
            <person name="Peters N."/>
            <person name="Adlem E."/>
            <person name="Kerhornou A."/>
            <person name="Lord A."/>
            <person name="Murphy L."/>
            <person name="Seeger K."/>
            <person name="Squares R."/>
            <person name="Rutter S."/>
            <person name="Quail M.A."/>
            <person name="Rajandream M.A."/>
            <person name="Harris D."/>
            <person name="Churcher C."/>
            <person name="Bentley S.D."/>
            <person name="Parkhill J."/>
            <person name="Thomson N.R."/>
            <person name="Avison M.B."/>
        </authorList>
    </citation>
    <scope>NUCLEOTIDE SEQUENCE [LARGE SCALE GENOMIC DNA]</scope>
    <source>
        <strain>K279a</strain>
    </source>
</reference>
<feature type="chain" id="PRO_1000128180" description="Small ribosomal subunit protein uS9">
    <location>
        <begin position="1"/>
        <end position="130"/>
    </location>
</feature>
<gene>
    <name evidence="1" type="primary">rpsI</name>
    <name type="ordered locus">Smlt4301</name>
</gene>
<name>RS9_STRMK</name>
<protein>
    <recommendedName>
        <fullName evidence="1">Small ribosomal subunit protein uS9</fullName>
    </recommendedName>
    <alternativeName>
        <fullName evidence="2">30S ribosomal protein S9</fullName>
    </alternativeName>
</protein>
<accession>B2FJU3</accession>
<organism>
    <name type="scientific">Stenotrophomonas maltophilia (strain K279a)</name>
    <dbReference type="NCBI Taxonomy" id="522373"/>
    <lineage>
        <taxon>Bacteria</taxon>
        <taxon>Pseudomonadati</taxon>
        <taxon>Pseudomonadota</taxon>
        <taxon>Gammaproteobacteria</taxon>
        <taxon>Lysobacterales</taxon>
        <taxon>Lysobacteraceae</taxon>
        <taxon>Stenotrophomonas</taxon>
        <taxon>Stenotrophomonas maltophilia group</taxon>
    </lineage>
</organism>
<keyword id="KW-1185">Reference proteome</keyword>
<keyword id="KW-0687">Ribonucleoprotein</keyword>
<keyword id="KW-0689">Ribosomal protein</keyword>
<sequence length="130" mass="14417">MAITQNYGTGRRKSSTARVFLRKGSGNITVNGRPLDEFFGRETARMIVRQPLELTKNTESFDILVTAAGGGTTGQAGAIRLGIARALVEYDETLKSELRKAGFMTRDAREVERKKVGLHKARRATQFSKR</sequence>
<comment type="similarity">
    <text evidence="1">Belongs to the universal ribosomal protein uS9 family.</text>
</comment>
<dbReference type="EMBL" id="AM743169">
    <property type="protein sequence ID" value="CAQ47686.1"/>
    <property type="molecule type" value="Genomic_DNA"/>
</dbReference>
<dbReference type="RefSeq" id="WP_005411311.1">
    <property type="nucleotide sequence ID" value="NC_010943.1"/>
</dbReference>
<dbReference type="SMR" id="B2FJU3"/>
<dbReference type="EnsemblBacteria" id="CAQ47686">
    <property type="protein sequence ID" value="CAQ47686"/>
    <property type="gene ID" value="Smlt4301"/>
</dbReference>
<dbReference type="GeneID" id="97262945"/>
<dbReference type="KEGG" id="sml:Smlt4301"/>
<dbReference type="eggNOG" id="COG0103">
    <property type="taxonomic scope" value="Bacteria"/>
</dbReference>
<dbReference type="HOGENOM" id="CLU_046483_2_1_6"/>
<dbReference type="Proteomes" id="UP000008840">
    <property type="component" value="Chromosome"/>
</dbReference>
<dbReference type="GO" id="GO:0022627">
    <property type="term" value="C:cytosolic small ribosomal subunit"/>
    <property type="evidence" value="ECO:0007669"/>
    <property type="project" value="TreeGrafter"/>
</dbReference>
<dbReference type="GO" id="GO:0003723">
    <property type="term" value="F:RNA binding"/>
    <property type="evidence" value="ECO:0007669"/>
    <property type="project" value="TreeGrafter"/>
</dbReference>
<dbReference type="GO" id="GO:0003735">
    <property type="term" value="F:structural constituent of ribosome"/>
    <property type="evidence" value="ECO:0007669"/>
    <property type="project" value="InterPro"/>
</dbReference>
<dbReference type="GO" id="GO:0006412">
    <property type="term" value="P:translation"/>
    <property type="evidence" value="ECO:0007669"/>
    <property type="project" value="UniProtKB-UniRule"/>
</dbReference>
<dbReference type="FunFam" id="3.30.230.10:FF:000001">
    <property type="entry name" value="30S ribosomal protein S9"/>
    <property type="match status" value="1"/>
</dbReference>
<dbReference type="Gene3D" id="3.30.230.10">
    <property type="match status" value="1"/>
</dbReference>
<dbReference type="HAMAP" id="MF_00532_B">
    <property type="entry name" value="Ribosomal_uS9_B"/>
    <property type="match status" value="1"/>
</dbReference>
<dbReference type="InterPro" id="IPR020568">
    <property type="entry name" value="Ribosomal_Su5_D2-typ_SF"/>
</dbReference>
<dbReference type="InterPro" id="IPR000754">
    <property type="entry name" value="Ribosomal_uS9"/>
</dbReference>
<dbReference type="InterPro" id="IPR023035">
    <property type="entry name" value="Ribosomal_uS9_bac/plastid"/>
</dbReference>
<dbReference type="InterPro" id="IPR020574">
    <property type="entry name" value="Ribosomal_uS9_CS"/>
</dbReference>
<dbReference type="InterPro" id="IPR014721">
    <property type="entry name" value="Ribsml_uS5_D2-typ_fold_subgr"/>
</dbReference>
<dbReference type="NCBIfam" id="NF001099">
    <property type="entry name" value="PRK00132.1"/>
    <property type="match status" value="1"/>
</dbReference>
<dbReference type="PANTHER" id="PTHR21569">
    <property type="entry name" value="RIBOSOMAL PROTEIN S9"/>
    <property type="match status" value="1"/>
</dbReference>
<dbReference type="PANTHER" id="PTHR21569:SF1">
    <property type="entry name" value="SMALL RIBOSOMAL SUBUNIT PROTEIN US9M"/>
    <property type="match status" value="1"/>
</dbReference>
<dbReference type="Pfam" id="PF00380">
    <property type="entry name" value="Ribosomal_S9"/>
    <property type="match status" value="1"/>
</dbReference>
<dbReference type="SUPFAM" id="SSF54211">
    <property type="entry name" value="Ribosomal protein S5 domain 2-like"/>
    <property type="match status" value="1"/>
</dbReference>
<dbReference type="PROSITE" id="PS00360">
    <property type="entry name" value="RIBOSOMAL_S9"/>
    <property type="match status" value="1"/>
</dbReference>
<evidence type="ECO:0000255" key="1">
    <source>
        <dbReference type="HAMAP-Rule" id="MF_00532"/>
    </source>
</evidence>
<evidence type="ECO:0000305" key="2"/>
<proteinExistence type="inferred from homology"/>